<organism>
    <name type="scientific">Arabidopsis thaliana</name>
    <name type="common">Mouse-ear cress</name>
    <dbReference type="NCBI Taxonomy" id="3702"/>
    <lineage>
        <taxon>Eukaryota</taxon>
        <taxon>Viridiplantae</taxon>
        <taxon>Streptophyta</taxon>
        <taxon>Embryophyta</taxon>
        <taxon>Tracheophyta</taxon>
        <taxon>Spermatophyta</taxon>
        <taxon>Magnoliopsida</taxon>
        <taxon>eudicotyledons</taxon>
        <taxon>Gunneridae</taxon>
        <taxon>Pentapetalae</taxon>
        <taxon>rosids</taxon>
        <taxon>malvids</taxon>
        <taxon>Brassicales</taxon>
        <taxon>Brassicaceae</taxon>
        <taxon>Camelineae</taxon>
        <taxon>Arabidopsis</taxon>
    </lineage>
</organism>
<gene>
    <name type="primary">MP3</name>
    <name evidence="3" type="synonym">MAPR2</name>
    <name type="ordered locus">At2g24940</name>
    <name type="ORF">F27C12.14</name>
</gene>
<sequence>MEFTAEQLSQYNGTDESKPIYVAIKGRVFDVTTGKSFYGSGGDYSMFAGKDASRALGKMSKNEEDVSPSLEGLTEKEINTLNDWETKFEAKYPVVGRVVS</sequence>
<accession>Q9SK39</accession>
<feature type="chain" id="PRO_0000121750" description="Probable steroid-binding protein 3">
    <location>
        <begin position="1"/>
        <end position="100"/>
    </location>
</feature>
<feature type="domain" description="Cytochrome b5 heme-binding">
    <location>
        <begin position="1"/>
        <end position="82"/>
    </location>
</feature>
<feature type="region of interest" description="Sterol-binding" evidence="1">
    <location>
        <begin position="1"/>
        <end position="82"/>
    </location>
</feature>
<feature type="modified residue" description="N-acetylmethionine" evidence="6">
    <location>
        <position position="1"/>
    </location>
</feature>
<feature type="strand" evidence="8">
    <location>
        <begin position="2"/>
        <end position="4"/>
    </location>
</feature>
<feature type="helix" evidence="7">
    <location>
        <begin position="5"/>
        <end position="8"/>
    </location>
</feature>
<feature type="strand" evidence="7">
    <location>
        <begin position="15"/>
        <end position="17"/>
    </location>
</feature>
<feature type="strand" evidence="7">
    <location>
        <begin position="20"/>
        <end position="24"/>
    </location>
</feature>
<feature type="strand" evidence="7">
    <location>
        <begin position="27"/>
        <end position="30"/>
    </location>
</feature>
<feature type="helix" evidence="7">
    <location>
        <begin position="32"/>
        <end position="34"/>
    </location>
</feature>
<feature type="helix" evidence="7">
    <location>
        <begin position="35"/>
        <end position="38"/>
    </location>
</feature>
<feature type="strand" evidence="7">
    <location>
        <begin position="39"/>
        <end position="42"/>
    </location>
</feature>
<feature type="turn" evidence="7">
    <location>
        <begin position="43"/>
        <end position="49"/>
    </location>
</feature>
<feature type="helix" evidence="7">
    <location>
        <begin position="53"/>
        <end position="57"/>
    </location>
</feature>
<feature type="strand" evidence="7">
    <location>
        <begin position="63"/>
        <end position="65"/>
    </location>
</feature>
<feature type="helix" evidence="7">
    <location>
        <begin position="75"/>
        <end position="89"/>
    </location>
</feature>
<feature type="strand" evidence="7">
    <location>
        <begin position="94"/>
        <end position="96"/>
    </location>
</feature>
<comment type="subcellular location">
    <subcellularLocation>
        <location evidence="5">Nucleus</location>
    </subcellularLocation>
</comment>
<comment type="induction">
    <text evidence="2">Down-regulated by auxin and cytokinin.</text>
</comment>
<comment type="domain">
    <text evidence="4">The cytochrome b5 heme-binding domain lacks the conserved iron-binding His residues at positions 37 and 61.</text>
</comment>
<comment type="similarity">
    <text evidence="4">Belongs to the cytochrome b5 family. MAPR subfamily.</text>
</comment>
<proteinExistence type="evidence at protein level"/>
<reference key="1">
    <citation type="journal article" date="1999" name="Nature">
        <title>Sequence and analysis of chromosome 2 of the plant Arabidopsis thaliana.</title>
        <authorList>
            <person name="Lin X."/>
            <person name="Kaul S."/>
            <person name="Rounsley S.D."/>
            <person name="Shea T.P."/>
            <person name="Benito M.-I."/>
            <person name="Town C.D."/>
            <person name="Fujii C.Y."/>
            <person name="Mason T.M."/>
            <person name="Bowman C.L."/>
            <person name="Barnstead M.E."/>
            <person name="Feldblyum T.V."/>
            <person name="Buell C.R."/>
            <person name="Ketchum K.A."/>
            <person name="Lee J.J."/>
            <person name="Ronning C.M."/>
            <person name="Koo H.L."/>
            <person name="Moffat K.S."/>
            <person name="Cronin L.A."/>
            <person name="Shen M."/>
            <person name="Pai G."/>
            <person name="Van Aken S."/>
            <person name="Umayam L."/>
            <person name="Tallon L.J."/>
            <person name="Gill J.E."/>
            <person name="Adams M.D."/>
            <person name="Carrera A.J."/>
            <person name="Creasy T.H."/>
            <person name="Goodman H.M."/>
            <person name="Somerville C.R."/>
            <person name="Copenhaver G.P."/>
            <person name="Preuss D."/>
            <person name="Nierman W.C."/>
            <person name="White O."/>
            <person name="Eisen J.A."/>
            <person name="Salzberg S.L."/>
            <person name="Fraser C.M."/>
            <person name="Venter J.C."/>
        </authorList>
    </citation>
    <scope>NUCLEOTIDE SEQUENCE [LARGE SCALE GENOMIC DNA]</scope>
    <source>
        <strain>cv. Columbia</strain>
    </source>
</reference>
<reference key="2">
    <citation type="journal article" date="2017" name="Plant J.">
        <title>Araport11: a complete reannotation of the Arabidopsis thaliana reference genome.</title>
        <authorList>
            <person name="Cheng C.Y."/>
            <person name="Krishnakumar V."/>
            <person name="Chan A.P."/>
            <person name="Thibaud-Nissen F."/>
            <person name="Schobel S."/>
            <person name="Town C.D."/>
        </authorList>
    </citation>
    <scope>GENOME REANNOTATION</scope>
    <source>
        <strain>cv. Columbia</strain>
    </source>
</reference>
<reference key="3">
    <citation type="journal article" date="2003" name="Science">
        <title>Empirical analysis of transcriptional activity in the Arabidopsis genome.</title>
        <authorList>
            <person name="Yamada K."/>
            <person name="Lim J."/>
            <person name="Dale J.M."/>
            <person name="Chen H."/>
            <person name="Shinn P."/>
            <person name="Palm C.J."/>
            <person name="Southwick A.M."/>
            <person name="Wu H.C."/>
            <person name="Kim C.J."/>
            <person name="Nguyen M."/>
            <person name="Pham P.K."/>
            <person name="Cheuk R.F."/>
            <person name="Karlin-Newmann G."/>
            <person name="Liu S.X."/>
            <person name="Lam B."/>
            <person name="Sakano H."/>
            <person name="Wu T."/>
            <person name="Yu G."/>
            <person name="Miranda M."/>
            <person name="Quach H.L."/>
            <person name="Tripp M."/>
            <person name="Chang C.H."/>
            <person name="Lee J.M."/>
            <person name="Toriumi M.J."/>
            <person name="Chan M.M."/>
            <person name="Tang C.C."/>
            <person name="Onodera C.S."/>
            <person name="Deng J.M."/>
            <person name="Akiyama K."/>
            <person name="Ansari Y."/>
            <person name="Arakawa T."/>
            <person name="Banh J."/>
            <person name="Banno F."/>
            <person name="Bowser L."/>
            <person name="Brooks S.Y."/>
            <person name="Carninci P."/>
            <person name="Chao Q."/>
            <person name="Choy N."/>
            <person name="Enju A."/>
            <person name="Goldsmith A.D."/>
            <person name="Gurjal M."/>
            <person name="Hansen N.F."/>
            <person name="Hayashizaki Y."/>
            <person name="Johnson-Hopson C."/>
            <person name="Hsuan V.W."/>
            <person name="Iida K."/>
            <person name="Karnes M."/>
            <person name="Khan S."/>
            <person name="Koesema E."/>
            <person name="Ishida J."/>
            <person name="Jiang P.X."/>
            <person name="Jones T."/>
            <person name="Kawai J."/>
            <person name="Kamiya A."/>
            <person name="Meyers C."/>
            <person name="Nakajima M."/>
            <person name="Narusaka M."/>
            <person name="Seki M."/>
            <person name="Sakurai T."/>
            <person name="Satou M."/>
            <person name="Tamse R."/>
            <person name="Vaysberg M."/>
            <person name="Wallender E.K."/>
            <person name="Wong C."/>
            <person name="Yamamura Y."/>
            <person name="Yuan S."/>
            <person name="Shinozaki K."/>
            <person name="Davis R.W."/>
            <person name="Theologis A."/>
            <person name="Ecker J.R."/>
        </authorList>
    </citation>
    <scope>NUCLEOTIDE SEQUENCE [LARGE SCALE MRNA]</scope>
    <source>
        <strain>cv. Columbia</strain>
    </source>
</reference>
<reference key="4">
    <citation type="submission" date="2002-03" db="EMBL/GenBank/DDBJ databases">
        <title>Full-length cDNA from Arabidopsis thaliana.</title>
        <authorList>
            <person name="Brover V.V."/>
            <person name="Troukhan M.E."/>
            <person name="Alexandrov N.A."/>
            <person name="Lu Y.-P."/>
            <person name="Flavell R.B."/>
            <person name="Feldmann K.A."/>
        </authorList>
    </citation>
    <scope>NUCLEOTIDE SEQUENCE [LARGE SCALE MRNA]</scope>
</reference>
<reference key="5">
    <citation type="journal article" date="2005" name="Bot. Bull. Acad. Sin.">
        <title>Characterization of a novel Arabidopsis protein family AtMAPR homologous to 25-Dx/IZAg/Hpr6.6 proteins.</title>
        <authorList>
            <person name="Kao A.L."/>
            <person name="Chang T.Y."/>
            <person name="Chang S.H."/>
            <person name="Su J.C."/>
            <person name="Yang C.C."/>
        </authorList>
    </citation>
    <scope>INDUCTION</scope>
    <scope>NOMENCLATURE</scope>
</reference>
<reference key="6">
    <citation type="journal article" date="2005" name="Plant Cell">
        <title>Arabidopsis membrane steroid binding protein 1 is involved in inhibition of cell elongation.</title>
        <authorList>
            <person name="Yang X.-H."/>
            <person name="Xu Z.-H."/>
            <person name="Xue H.-W."/>
        </authorList>
    </citation>
    <scope>SUBCELLULAR LOCATION</scope>
    <source>
        <strain>cv. Columbia</strain>
    </source>
</reference>
<reference key="7">
    <citation type="journal article" date="2012" name="Mol. Cell. Proteomics">
        <title>Comparative large-scale characterisation of plant vs. mammal proteins reveals similar and idiosyncratic N-alpha acetylation features.</title>
        <authorList>
            <person name="Bienvenut W.V."/>
            <person name="Sumpton D."/>
            <person name="Martinez A."/>
            <person name="Lilla S."/>
            <person name="Espagne C."/>
            <person name="Meinnel T."/>
            <person name="Giglione C."/>
        </authorList>
    </citation>
    <scope>ACETYLATION [LARGE SCALE ANALYSIS] AT MET-1</scope>
    <scope>IDENTIFICATION BY MASS SPECTROMETRY [LARGE SCALE ANALYSIS]</scope>
</reference>
<reference key="8">
    <citation type="submission" date="2003-12" db="PDB data bank">
        <title>Solution structure of an Arabidopsis homologue of the mammalian membrane-associated progesterone receptor.</title>
        <authorList>
            <consortium name="RIKEN structural genomics initiative (RSGI)"/>
        </authorList>
    </citation>
    <scope>STRUCTURE BY NMR OF 1-100</scope>
</reference>
<reference key="9">
    <citation type="journal article" date="2004" name="J. Biomol. NMR">
        <title>Hypothetical protein At2g24940.1 from Arabidopsis thaliana has a cytochrome b5 like fold.</title>
        <authorList>
            <person name="Song J."/>
            <person name="Vinarov D."/>
            <person name="Tyler E.M."/>
            <person name="Shahan M.N."/>
            <person name="Tyler R.C."/>
            <person name="Markley J.L."/>
        </authorList>
    </citation>
    <scope>STRUCTURE BY NMR OF 1-100</scope>
</reference>
<protein>
    <recommendedName>
        <fullName>Probable steroid-binding protein 3</fullName>
        <shortName>AtMP3</shortName>
    </recommendedName>
    <alternativeName>
        <fullName evidence="3">Membrane-associated progesterone-binding protein 2</fullName>
        <shortName evidence="3">AtMAPR2</shortName>
    </alternativeName>
</protein>
<name>SBP3_ARATH</name>
<evidence type="ECO:0000250" key="1"/>
<evidence type="ECO:0000269" key="2">
    <source ref="5"/>
</evidence>
<evidence type="ECO:0000303" key="3">
    <source ref="5"/>
</evidence>
<evidence type="ECO:0000305" key="4"/>
<evidence type="ECO:0000305" key="5">
    <source>
    </source>
</evidence>
<evidence type="ECO:0007744" key="6">
    <source>
    </source>
</evidence>
<evidence type="ECO:0007829" key="7">
    <source>
        <dbReference type="PDB" id="1J03"/>
    </source>
</evidence>
<evidence type="ECO:0007829" key="8">
    <source>
        <dbReference type="PDB" id="1T0G"/>
    </source>
</evidence>
<keyword id="KW-0002">3D-structure</keyword>
<keyword id="KW-0007">Acetylation</keyword>
<keyword id="KW-0446">Lipid-binding</keyword>
<keyword id="KW-0539">Nucleus</keyword>
<keyword id="KW-1185">Reference proteome</keyword>
<keyword id="KW-0754">Steroid-binding</keyword>
<dbReference type="EMBL" id="AC006585">
    <property type="protein sequence ID" value="AAD23019.1"/>
    <property type="molecule type" value="Genomic_DNA"/>
</dbReference>
<dbReference type="EMBL" id="CP002685">
    <property type="protein sequence ID" value="AEC07640.1"/>
    <property type="molecule type" value="Genomic_DNA"/>
</dbReference>
<dbReference type="EMBL" id="BT002446">
    <property type="protein sequence ID" value="AAO00806.1"/>
    <property type="molecule type" value="mRNA"/>
</dbReference>
<dbReference type="EMBL" id="BT008438">
    <property type="protein sequence ID" value="AAP37797.1"/>
    <property type="molecule type" value="mRNA"/>
</dbReference>
<dbReference type="EMBL" id="AY084294">
    <property type="protein sequence ID" value="AAM60885.1"/>
    <property type="molecule type" value="mRNA"/>
</dbReference>
<dbReference type="PIR" id="C84642">
    <property type="entry name" value="C84642"/>
</dbReference>
<dbReference type="RefSeq" id="NP_001318286.1">
    <property type="nucleotide sequence ID" value="NM_001335965.1"/>
</dbReference>
<dbReference type="PDB" id="1J03">
    <property type="method" value="NMR"/>
    <property type="chains" value="A=1-100"/>
</dbReference>
<dbReference type="PDB" id="1T0G">
    <property type="method" value="NMR"/>
    <property type="chains" value="A=2-100"/>
</dbReference>
<dbReference type="PDBsum" id="1J03"/>
<dbReference type="PDBsum" id="1T0G"/>
<dbReference type="BMRB" id="Q9SK39"/>
<dbReference type="SMR" id="Q9SK39"/>
<dbReference type="BioGRID" id="2384">
    <property type="interactions" value="33"/>
</dbReference>
<dbReference type="FunCoup" id="Q9SK39">
    <property type="interactions" value="1178"/>
</dbReference>
<dbReference type="IntAct" id="Q9SK39">
    <property type="interactions" value="32"/>
</dbReference>
<dbReference type="STRING" id="3702.Q9SK39"/>
<dbReference type="iPTMnet" id="Q9SK39"/>
<dbReference type="MetOSite" id="Q9SK39"/>
<dbReference type="PaxDb" id="3702-AT2G24940.1"/>
<dbReference type="ProteomicsDB" id="226649"/>
<dbReference type="EnsemblPlants" id="AT2G24940.1">
    <property type="protein sequence ID" value="AT2G24940.1"/>
    <property type="gene ID" value="AT2G24940"/>
</dbReference>
<dbReference type="GeneID" id="817032"/>
<dbReference type="Gramene" id="AT2G24940.1">
    <property type="protein sequence ID" value="AT2G24940.1"/>
    <property type="gene ID" value="AT2G24940"/>
</dbReference>
<dbReference type="KEGG" id="ath:AT2G24940"/>
<dbReference type="Araport" id="AT2G24940"/>
<dbReference type="TAIR" id="AT2G24940">
    <property type="gene designation" value="MAPR2"/>
</dbReference>
<dbReference type="eggNOG" id="KOG1110">
    <property type="taxonomic scope" value="Eukaryota"/>
</dbReference>
<dbReference type="HOGENOM" id="CLU_042860_3_1_1"/>
<dbReference type="InParanoid" id="Q9SK39"/>
<dbReference type="OMA" id="PGGSYCM"/>
<dbReference type="OrthoDB" id="547796at2759"/>
<dbReference type="PhylomeDB" id="Q9SK39"/>
<dbReference type="EvolutionaryTrace" id="Q9SK39"/>
<dbReference type="PRO" id="PR:Q9SK39"/>
<dbReference type="Proteomes" id="UP000006548">
    <property type="component" value="Chromosome 2"/>
</dbReference>
<dbReference type="ExpressionAtlas" id="Q9SK39">
    <property type="expression patterns" value="baseline and differential"/>
</dbReference>
<dbReference type="GO" id="GO:0005829">
    <property type="term" value="C:cytosol"/>
    <property type="evidence" value="ECO:0007005"/>
    <property type="project" value="TAIR"/>
</dbReference>
<dbReference type="GO" id="GO:0005634">
    <property type="term" value="C:nucleus"/>
    <property type="evidence" value="ECO:0007669"/>
    <property type="project" value="UniProtKB-SubCell"/>
</dbReference>
<dbReference type="GO" id="GO:0005773">
    <property type="term" value="C:vacuole"/>
    <property type="evidence" value="ECO:0007005"/>
    <property type="project" value="TAIR"/>
</dbReference>
<dbReference type="GO" id="GO:0005496">
    <property type="term" value="F:steroid binding"/>
    <property type="evidence" value="ECO:0007669"/>
    <property type="project" value="UniProtKB-KW"/>
</dbReference>
<dbReference type="FunFam" id="3.10.120.10:FF:000003">
    <property type="entry name" value="membrane-associated progesterone receptor component 1"/>
    <property type="match status" value="1"/>
</dbReference>
<dbReference type="Gene3D" id="3.10.120.10">
    <property type="entry name" value="Cytochrome b5-like heme/steroid binding domain"/>
    <property type="match status" value="1"/>
</dbReference>
<dbReference type="InterPro" id="IPR001199">
    <property type="entry name" value="Cyt_B5-like_heme/steroid-bd"/>
</dbReference>
<dbReference type="InterPro" id="IPR036400">
    <property type="entry name" value="Cyt_B5-like_heme/steroid_sf"/>
</dbReference>
<dbReference type="InterPro" id="IPR050577">
    <property type="entry name" value="MAPR/NEUFC/NENF-like"/>
</dbReference>
<dbReference type="PANTHER" id="PTHR10281:SF76">
    <property type="entry name" value="CALCUTTA CUP-RELATED"/>
    <property type="match status" value="1"/>
</dbReference>
<dbReference type="PANTHER" id="PTHR10281">
    <property type="entry name" value="MEMBRANE-ASSOCIATED PROGESTERONE RECEPTOR COMPONENT-RELATED"/>
    <property type="match status" value="1"/>
</dbReference>
<dbReference type="Pfam" id="PF00173">
    <property type="entry name" value="Cyt-b5"/>
    <property type="match status" value="1"/>
</dbReference>
<dbReference type="SMART" id="SM01117">
    <property type="entry name" value="Cyt-b5"/>
    <property type="match status" value="1"/>
</dbReference>
<dbReference type="SUPFAM" id="SSF55856">
    <property type="entry name" value="Cytochrome b5-like heme/steroid binding domain"/>
    <property type="match status" value="1"/>
</dbReference>